<evidence type="ECO:0000250" key="1">
    <source>
        <dbReference type="UniProtKB" id="O34539"/>
    </source>
</evidence>
<evidence type="ECO:0000269" key="2">
    <source>
    </source>
</evidence>
<evidence type="ECO:0000269" key="3">
    <source>
    </source>
</evidence>
<evidence type="ECO:0000269" key="4">
    <source>
    </source>
</evidence>
<evidence type="ECO:0000269" key="5">
    <source>
    </source>
</evidence>
<evidence type="ECO:0000269" key="6">
    <source>
    </source>
</evidence>
<evidence type="ECO:0000269" key="7">
    <source>
    </source>
</evidence>
<evidence type="ECO:0000269" key="8">
    <source>
    </source>
</evidence>
<evidence type="ECO:0000269" key="9">
    <source>
    </source>
</evidence>
<evidence type="ECO:0000303" key="10">
    <source>
    </source>
</evidence>
<evidence type="ECO:0000305" key="11"/>
<evidence type="ECO:0000312" key="12">
    <source>
        <dbReference type="EMBL" id="AAU23479.1"/>
    </source>
</evidence>
<accession>Q65JC2</accession>
<accession>Q62UT0</accession>
<dbReference type="EC" id="2.4.1.384" evidence="2 3 4 5 6 7 8"/>
<dbReference type="EMBL" id="CP000002">
    <property type="protein sequence ID" value="AAU23479.1"/>
    <property type="molecule type" value="Genomic_DNA"/>
</dbReference>
<dbReference type="RefSeq" id="WP_003182014.1">
    <property type="nucleotide sequence ID" value="NC_006322.1"/>
</dbReference>
<dbReference type="SMR" id="Q65JC2"/>
<dbReference type="STRING" id="279010.BL00446"/>
<dbReference type="CAZy" id="GT1">
    <property type="family name" value="Glycosyltransferase Family 1"/>
</dbReference>
<dbReference type="GeneID" id="92861460"/>
<dbReference type="KEGG" id="bld:BLi01948"/>
<dbReference type="KEGG" id="bli:BL00446"/>
<dbReference type="PATRIC" id="fig|279010.13.peg.1950"/>
<dbReference type="eggNOG" id="COG1819">
    <property type="taxonomic scope" value="Bacteria"/>
</dbReference>
<dbReference type="HOGENOM" id="CLU_000537_7_1_9"/>
<dbReference type="BRENDA" id="2.4.1.81">
    <property type="organism ID" value="669"/>
</dbReference>
<dbReference type="BRENDA" id="2.4.1.B84">
    <property type="organism ID" value="669"/>
</dbReference>
<dbReference type="BRENDA" id="2.4.1.B85">
    <property type="organism ID" value="669"/>
</dbReference>
<dbReference type="Proteomes" id="UP000000606">
    <property type="component" value="Chromosome"/>
</dbReference>
<dbReference type="GO" id="GO:0016758">
    <property type="term" value="F:hexosyltransferase activity"/>
    <property type="evidence" value="ECO:0007669"/>
    <property type="project" value="InterPro"/>
</dbReference>
<dbReference type="GO" id="GO:0008194">
    <property type="term" value="F:UDP-glycosyltransferase activity"/>
    <property type="evidence" value="ECO:0007669"/>
    <property type="project" value="InterPro"/>
</dbReference>
<dbReference type="GO" id="GO:0017000">
    <property type="term" value="P:antibiotic biosynthetic process"/>
    <property type="evidence" value="ECO:0007669"/>
    <property type="project" value="UniProtKB-ARBA"/>
</dbReference>
<dbReference type="CDD" id="cd03784">
    <property type="entry name" value="GT1_Gtf-like"/>
    <property type="match status" value="1"/>
</dbReference>
<dbReference type="FunFam" id="3.40.50.2000:FF:000072">
    <property type="entry name" value="Glycosyl transferase"/>
    <property type="match status" value="1"/>
</dbReference>
<dbReference type="Gene3D" id="3.40.50.2000">
    <property type="entry name" value="Glycogen Phosphorylase B"/>
    <property type="match status" value="2"/>
</dbReference>
<dbReference type="InterPro" id="IPR010610">
    <property type="entry name" value="EryCIII-like_C"/>
</dbReference>
<dbReference type="InterPro" id="IPR050426">
    <property type="entry name" value="Glycosyltransferase_28"/>
</dbReference>
<dbReference type="InterPro" id="IPR002213">
    <property type="entry name" value="UDP_glucos_trans"/>
</dbReference>
<dbReference type="InterPro" id="IPR006326">
    <property type="entry name" value="UDPGT_MGT-like"/>
</dbReference>
<dbReference type="NCBIfam" id="TIGR01426">
    <property type="entry name" value="MGT"/>
    <property type="match status" value="1"/>
</dbReference>
<dbReference type="PANTHER" id="PTHR48050">
    <property type="entry name" value="STEROL 3-BETA-GLUCOSYLTRANSFERASE"/>
    <property type="match status" value="1"/>
</dbReference>
<dbReference type="PANTHER" id="PTHR48050:SF13">
    <property type="entry name" value="STEROL 3-BETA-GLUCOSYLTRANSFERASE UGT80A2"/>
    <property type="match status" value="1"/>
</dbReference>
<dbReference type="Pfam" id="PF06722">
    <property type="entry name" value="EryCIII-like_C"/>
    <property type="match status" value="1"/>
</dbReference>
<dbReference type="SUPFAM" id="SSF53756">
    <property type="entry name" value="UDP-Glycosyltransferase/glycogen phosphorylase"/>
    <property type="match status" value="1"/>
</dbReference>
<name>NDPGT_BACLD</name>
<protein>
    <recommendedName>
        <fullName evidence="11">NDP-glycosyltransferase YjiC</fullName>
        <ecNumber evidence="2 3 4 5 6 7 8">2.4.1.384</ecNumber>
    </recommendedName>
    <alternativeName>
        <fullName evidence="10">UDP-glucosyltransferase YjiC</fullName>
    </alternativeName>
</protein>
<comment type="function">
    <text evidence="2 3 4 5 6 7 8 9">Glycosyltransferase that can glycosylate a wide range of substrates, including various flavonoids (flavones, flavonols, flavanones, flavanols, chalcones), isoflavonoids and stilbenes, to produce multiple glycosylated products (PubMed:23542617, PubMed:23974133, PubMed:24170092, PubMed:24893262, PubMed:24949266, PubMed:25239890, PubMed:27444326, PubMed:32238768). It can accept diverse nucleotide diphosphate-D/L-sugars as donors, including ADP-, GDP-, CDP-, TDP- or UDP-alpha-D-glucose, and catalyzes O-, N-, or S-glycosylation (PubMed:23542617, PubMed:23974133, PubMed:24170092, PubMed:24893262, PubMed:24949266, PubMed:25239890, PubMed:27444326, PubMed:32238768). In vitro, catalyzes the glycosylation of, among others, apigenin, 3-hydroxyflavone, phloretin or resveratrol, resulting in multiple glucosylated products, along with mono-, di-, tri- and tetraglucosides (PubMed:23542617, PubMed:23974133, PubMed:24170092, PubMed:24893262, PubMed:25239890, PubMed:27444326). Can also catalyze the glycosylation of the macrolide epothilone A with diverse NDP-D/L-sugars, forming different epothilone A glycoside derivatives (PubMed:24949266).</text>
</comment>
<comment type="catalytic activity">
    <reaction evidence="2 3 4 5 6 7 8 9">
        <text>an NDP-glycose + an acceptor = a glycosylated acceptor + NDP.</text>
        <dbReference type="EC" id="2.4.1.384"/>
    </reaction>
</comment>
<comment type="biotechnology">
    <text evidence="4 6 7 9">Such glycosyltransferases with substrate flexibility and less regioselectivity can be utilized for glucosylation of a broad range of pharmacologically and industrially important compounds (PubMed:24170092). Glycosylation is an efficient tool for generating biologically potent and diverse novel natural and unnatural product glycoside compounds with enhanced drug efficacy. For instance, generation of novel resveratrol glycosides could facilitate the development of drugs to treat oxidative- stress-induced diseases and to provide antiaging functions (PubMed:25239890). Glycosylation of epothilones, a class of potential cancer drugs, may improve their efficacy as therapeutic drugs (PubMed:24949266). YjiC is a promiscuous enzyme for conjugating diverse sugars at amine and thiol functional groups of small molecules applicable for generating glycofunctionalized chemical diversity libraries (PubMed:32238768).</text>
</comment>
<comment type="similarity">
    <text evidence="11">Belongs to the UDP-glycosyltransferase family.</text>
</comment>
<reference key="1">
    <citation type="journal article" date="2004" name="Genome Biol.">
        <title>Complete genome sequence of the industrial bacterium Bacillus licheniformis and comparisons with closely related Bacillus species.</title>
        <authorList>
            <person name="Rey M.W."/>
            <person name="Ramaiya P."/>
            <person name="Nelson B.A."/>
            <person name="Brody-Karpin S.D."/>
            <person name="Zaretsky E.J."/>
            <person name="Tang M."/>
            <person name="Lopez de Leon A."/>
            <person name="Xiang H."/>
            <person name="Gusti V."/>
            <person name="Clausen I.G."/>
            <person name="Olsen P.B."/>
            <person name="Rasmussen M.D."/>
            <person name="Andersen J.T."/>
            <person name="Joergensen P.L."/>
            <person name="Larsen T.S."/>
            <person name="Sorokin A."/>
            <person name="Bolotin A."/>
            <person name="Lapidus A."/>
            <person name="Galleron N."/>
            <person name="Ehrlich S.D."/>
            <person name="Berka R.M."/>
        </authorList>
    </citation>
    <scope>NUCLEOTIDE SEQUENCE [LARGE SCALE GENOMIC DNA]</scope>
    <source>
        <strain>ATCC 14580 / DSM 13 / JCM 2505 / CCUG 7422 / NBRC 12200 / NCIMB 9375 / NCTC 10341 / NRRL NRS-1264 / Gibson 46</strain>
    </source>
</reference>
<reference key="2">
    <citation type="journal article" date="2013" name="Appl. Environ. Microbiol.">
        <title>Enzymatic synthesis of novel phloretin glucosides.</title>
        <authorList>
            <person name="Pandey R.P."/>
            <person name="Li T.F."/>
            <person name="Kim E.H."/>
            <person name="Yamaguchi T."/>
            <person name="Park Y.I."/>
            <person name="Kim J.S."/>
            <person name="Sohng J.K."/>
        </authorList>
    </citation>
    <scope>FUNCTION</scope>
    <scope>CATALYTIC ACTIVITY</scope>
    <source>
        <strain>ATCC 14580 / DSM 13 / JCM 2505 / CCUG 7422 / NBRC 12200 / NCIMB 9375 / NCTC 10341 / NRRL NRS-1264 / Gibson 46</strain>
    </source>
</reference>
<reference key="3">
    <citation type="journal article" date="2013" name="Appl. Environ. Microbiol.">
        <title>Probing 3-hydroxyflavone for in vitro glycorandomization of flavonols by YjiC.</title>
        <authorList>
            <person name="Pandey R.P."/>
            <person name="Parajuli P."/>
            <person name="Koirala N."/>
            <person name="Park J.W."/>
            <person name="Sohng J.K."/>
        </authorList>
    </citation>
    <scope>FUNCTION</scope>
    <scope>CATALYTIC ACTIVITY</scope>
    <source>
        <strain>ATCC 14580 / DSM 13 / JCM 2505 / CCUG 7422 / NBRC 12200 / NCIMB 9375 / NCTC 10341 / NRRL NRS-1264 / Gibson 46</strain>
    </source>
</reference>
<reference key="4">
    <citation type="journal article" date="2013" name="Mol. Cells">
        <title>Enzymatic synthesis of apigenin glucosides by glucosyltransferase (YjiC) from Bacillus licheniformis DSM 13.</title>
        <authorList>
            <person name="Gurung R.B."/>
            <person name="Kim E.H."/>
            <person name="Oh T.J."/>
            <person name="Sohng J.K."/>
        </authorList>
    </citation>
    <scope>FUNCTION</scope>
    <scope>CATALYTIC ACTIVITY</scope>
    <scope>BIOTECHNOLOGY</scope>
    <source>
        <strain>ATCC 14580 / DSM 13 / JCM 2505 / CCUG 7422 / NBRC 12200 / NCIMB 9375 / NCTC 10341 / NRRL NRS-1264 / Gibson 46</strain>
    </source>
</reference>
<reference key="5">
    <citation type="journal article" date="2014" name="Carbohydr. Res.">
        <title>Assessing acceptor substrate promiscuity of YjiC-mediated glycosylation toward flavonoids.</title>
        <authorList>
            <person name="Pandey R.P."/>
            <person name="Gurung R.B."/>
            <person name="Parajuli P."/>
            <person name="Koirala N."/>
            <person name="Tuoi L.T."/>
            <person name="Sohng J.K."/>
        </authorList>
    </citation>
    <scope>FUNCTION</scope>
    <scope>CATALYTIC ACTIVITY</scope>
    <source>
        <strain>ATCC 14580 / DSM 13 / JCM 2505 / CCUG 7422 / NBRC 12200 / NCIMB 9375 / NCTC 10341 / NRRL NRS-1264 / Gibson 46</strain>
    </source>
</reference>
<reference key="6">
    <citation type="journal article" date="2014" name="Appl. Environ. Microbiol.">
        <title>Enzymatic biosynthesis of novel resveratrol glucoside and glycoside derivatives.</title>
        <authorList>
            <person name="Pandey R.P."/>
            <person name="Parajuli P."/>
            <person name="Shin J.Y."/>
            <person name="Lee J."/>
            <person name="Lee S."/>
            <person name="Hong Y.S."/>
            <person name="Park Y.I."/>
            <person name="Kim J.S."/>
            <person name="Sohng J.K."/>
        </authorList>
    </citation>
    <scope>FUNCTION</scope>
    <scope>CATALYTIC ACTIVITY</scope>
    <scope>BIOTECHNOLOGY</scope>
    <source>
        <strain>ATCC 14580 / DSM 13 / JCM 2505 / CCUG 7422 / NBRC 12200 / NCIMB 9375 / NCTC 10341 / NRRL NRS-1264 / Gibson 46</strain>
    </source>
</reference>
<reference key="7">
    <citation type="journal article" date="2014" name="AMB Express">
        <title>Enzymatic synthesis of epothilone A glycosides.</title>
        <authorList>
            <person name="Parajuli P."/>
            <person name="Pandey R.P."/>
            <person name="Koirala N."/>
            <person name="Yoon Y.J."/>
            <person name="Kim B.G."/>
            <person name="Sohng J.K."/>
        </authorList>
    </citation>
    <scope>FUNCTION</scope>
    <scope>CATALYTIC ACTIVITY</scope>
    <scope>BIOTECHNOLOGY</scope>
    <source>
        <strain>ATCC 14580 / DSM 13 / JCM 2505 / CCUG 7422 / NBRC 12200 / NCIMB 9375 / NCTC 10341 / NRRL NRS-1264 / Gibson 46</strain>
    </source>
</reference>
<reference key="8">
    <citation type="journal article" date="2016" name="Enzyme Microb. Technol.">
        <title>Donor specificity of YjiC glycosyltransferase determines the conjugation of cytosolic NDP-sugar in in vivo glycosylation reactions.</title>
        <authorList>
            <person name="Pandey R.P."/>
            <person name="Parajuli P."/>
            <person name="Gurung R.B."/>
            <person name="Sohng J.K."/>
        </authorList>
    </citation>
    <scope>FUNCTION</scope>
    <scope>CATALYTIC ACTIVITY</scope>
    <source>
        <strain>ATCC 14580 / DSM 13 / JCM 2505 / CCUG 7422 / NBRC 12200 / NCIMB 9375 / NCTC 10341 / NRRL NRS-1264 / Gibson 46</strain>
    </source>
</reference>
<reference key="9">
    <citation type="journal article" date="2020" name="J. Microbiol. Biotechnol.">
        <title>Exploring the nucleophilic N- and S-glycosylation capacity of Bacillus licheniformis YjiC enzyme.</title>
        <authorList>
            <person name="Bashyal P."/>
            <person name="Thapa S.B."/>
            <person name="Kim T.S."/>
            <person name="Pandey R.P."/>
            <person name="Sohng J.K."/>
        </authorList>
    </citation>
    <scope>FUNCTION IN N- AND S-GLYCOSYLATION</scope>
    <scope>CATALYTIC ACTIVITY</scope>
    <scope>BIOTECHNOLOGY</scope>
    <source>
        <strain>ATCC 14580 / DSM 13 / JCM 2505 / CCUG 7422 / NBRC 12200 / NCIMB 9375 / NCTC 10341 / NRRL NRS-1264 / Gibson 46</strain>
    </source>
</reference>
<feature type="chain" id="PRO_0000455005" description="NDP-glycosyltransferase YjiC">
    <location>
        <begin position="1"/>
        <end position="396"/>
    </location>
</feature>
<feature type="binding site" evidence="1">
    <location>
        <position position="18"/>
    </location>
    <ligand>
        <name>UDP</name>
        <dbReference type="ChEBI" id="CHEBI:58223"/>
    </ligand>
</feature>
<feature type="binding site" evidence="1">
    <location>
        <position position="234"/>
    </location>
    <ligand>
        <name>UDP</name>
        <dbReference type="ChEBI" id="CHEBI:58223"/>
    </ligand>
</feature>
<feature type="binding site" evidence="1">
    <location>
        <position position="283"/>
    </location>
    <ligand>
        <name>UDP</name>
        <dbReference type="ChEBI" id="CHEBI:58223"/>
    </ligand>
</feature>
<feature type="binding site" evidence="1">
    <location>
        <position position="298"/>
    </location>
    <ligand>
        <name>UDP</name>
        <dbReference type="ChEBI" id="CHEBI:58223"/>
    </ligand>
</feature>
<feature type="binding site" evidence="1">
    <location>
        <begin position="302"/>
        <end position="306"/>
    </location>
    <ligand>
        <name>UDP</name>
        <dbReference type="ChEBI" id="CHEBI:58223"/>
    </ligand>
</feature>
<proteinExistence type="evidence at protein level"/>
<keyword id="KW-0328">Glycosyltransferase</keyword>
<keyword id="KW-1185">Reference proteome</keyword>
<keyword id="KW-0808">Transferase</keyword>
<sequence>MGHKHIAIFNIPAHGHINPTLALTASLVKRGYRVTYPVTDEFVKAVEETGAEPLNYRSTLNIDPQQIRELMKNKKDMSQAPLMFIKEMEEVLPQLEALYENDKPDLILFDFMAMAGKLLAEKFGIEAVRLCSTYAQNEHFTFRSISEEFKIELTPEQEDALKNSNLPSFNFEDMFEPAKLNIVFMPRAFQPYGETFDERFSFVGPSLAKRKFQEKETPIISDSGRPVMLISLGTAFNAWPEFYHMCIEAFRDTKWQVIMAVGTTIDPESFDDIPENFSIHQRVPQLEILKKAELFITHGGMNSTMEGLNAGVPLVAVPQMPEQEITARRVEELGLGKHLQPEDTTAASLREAVSQTDGDPHVLKRIQDMQKHIKQAGGAEKAADEIEAFLAPAGVK</sequence>
<gene>
    <name evidence="12" type="primary">yjiC</name>
    <name evidence="12" type="ordered locus">BL00446</name>
</gene>
<organism>
    <name type="scientific">Bacillus licheniformis (strain ATCC 14580 / DSM 13 / JCM 2505 / CCUG 7422 / NBRC 12200 / NCIMB 9375 / NCTC 10341 / NRRL NRS-1264 / Gibson 46)</name>
    <dbReference type="NCBI Taxonomy" id="279010"/>
    <lineage>
        <taxon>Bacteria</taxon>
        <taxon>Bacillati</taxon>
        <taxon>Bacillota</taxon>
        <taxon>Bacilli</taxon>
        <taxon>Bacillales</taxon>
        <taxon>Bacillaceae</taxon>
        <taxon>Bacillus</taxon>
    </lineage>
</organism>